<organism>
    <name type="scientific">Arabidopsis thaliana</name>
    <name type="common">Mouse-ear cress</name>
    <dbReference type="NCBI Taxonomy" id="3702"/>
    <lineage>
        <taxon>Eukaryota</taxon>
        <taxon>Viridiplantae</taxon>
        <taxon>Streptophyta</taxon>
        <taxon>Embryophyta</taxon>
        <taxon>Tracheophyta</taxon>
        <taxon>Spermatophyta</taxon>
        <taxon>Magnoliopsida</taxon>
        <taxon>eudicotyledons</taxon>
        <taxon>Gunneridae</taxon>
        <taxon>Pentapetalae</taxon>
        <taxon>rosids</taxon>
        <taxon>malvids</taxon>
        <taxon>Brassicales</taxon>
        <taxon>Brassicaceae</taxon>
        <taxon>Camelineae</taxon>
        <taxon>Arabidopsis</taxon>
    </lineage>
</organism>
<feature type="initiator methionine" description="Removed" evidence="2">
    <location>
        <position position="1"/>
    </location>
</feature>
<feature type="chain" id="PRO_0000373816" description="V-type proton ATPase subunit B2">
    <location>
        <begin position="2"/>
        <end position="487"/>
    </location>
</feature>
<feature type="modified residue" description="N-acetylglycine" evidence="2">
    <location>
        <position position="2"/>
    </location>
</feature>
<feature type="sequence conflict" description="In Ref. 4; BAH19957." evidence="1" ref="4">
    <original>K</original>
    <variation>R</variation>
    <location>
        <position position="37"/>
    </location>
</feature>
<feature type="sequence conflict" description="In Ref. 4; BAH19957." evidence="1" ref="4">
    <original>I</original>
    <variation>F</variation>
    <location>
        <position position="330"/>
    </location>
</feature>
<evidence type="ECO:0000305" key="1"/>
<evidence type="ECO:0007744" key="2">
    <source>
    </source>
</evidence>
<keyword id="KW-0007">Acetylation</keyword>
<keyword id="KW-0025">Alternative splicing</keyword>
<keyword id="KW-0375">Hydrogen ion transport</keyword>
<keyword id="KW-0406">Ion transport</keyword>
<keyword id="KW-0472">Membrane</keyword>
<keyword id="KW-1185">Reference proteome</keyword>
<keyword id="KW-0813">Transport</keyword>
<keyword id="KW-0926">Vacuole</keyword>
<accession>Q9SZN1</accession>
<accession>B9DGU0</accession>
<accession>B9DHP3</accession>
<accession>Q56W88</accession>
<accession>Q94AY7</accession>
<reference key="1">
    <citation type="journal article" date="1999" name="Nature">
        <title>Sequence and analysis of chromosome 4 of the plant Arabidopsis thaliana.</title>
        <authorList>
            <person name="Mayer K.F.X."/>
            <person name="Schueller C."/>
            <person name="Wambutt R."/>
            <person name="Murphy G."/>
            <person name="Volckaert G."/>
            <person name="Pohl T."/>
            <person name="Duesterhoeft A."/>
            <person name="Stiekema W."/>
            <person name="Entian K.-D."/>
            <person name="Terryn N."/>
            <person name="Harris B."/>
            <person name="Ansorge W."/>
            <person name="Brandt P."/>
            <person name="Grivell L.A."/>
            <person name="Rieger M."/>
            <person name="Weichselgartner M."/>
            <person name="de Simone V."/>
            <person name="Obermaier B."/>
            <person name="Mache R."/>
            <person name="Mueller M."/>
            <person name="Kreis M."/>
            <person name="Delseny M."/>
            <person name="Puigdomenech P."/>
            <person name="Watson M."/>
            <person name="Schmidtheini T."/>
            <person name="Reichert B."/>
            <person name="Portetelle D."/>
            <person name="Perez-Alonso M."/>
            <person name="Boutry M."/>
            <person name="Bancroft I."/>
            <person name="Vos P."/>
            <person name="Hoheisel J."/>
            <person name="Zimmermann W."/>
            <person name="Wedler H."/>
            <person name="Ridley P."/>
            <person name="Langham S.-A."/>
            <person name="McCullagh B."/>
            <person name="Bilham L."/>
            <person name="Robben J."/>
            <person name="van der Schueren J."/>
            <person name="Grymonprez B."/>
            <person name="Chuang Y.-J."/>
            <person name="Vandenbussche F."/>
            <person name="Braeken M."/>
            <person name="Weltjens I."/>
            <person name="Voet M."/>
            <person name="Bastiaens I."/>
            <person name="Aert R."/>
            <person name="Defoor E."/>
            <person name="Weitzenegger T."/>
            <person name="Bothe G."/>
            <person name="Ramsperger U."/>
            <person name="Hilbert H."/>
            <person name="Braun M."/>
            <person name="Holzer E."/>
            <person name="Brandt A."/>
            <person name="Peters S."/>
            <person name="van Staveren M."/>
            <person name="Dirkse W."/>
            <person name="Mooijman P."/>
            <person name="Klein Lankhorst R."/>
            <person name="Rose M."/>
            <person name="Hauf J."/>
            <person name="Koetter P."/>
            <person name="Berneiser S."/>
            <person name="Hempel S."/>
            <person name="Feldpausch M."/>
            <person name="Lamberth S."/>
            <person name="Van den Daele H."/>
            <person name="De Keyser A."/>
            <person name="Buysshaert C."/>
            <person name="Gielen J."/>
            <person name="Villarroel R."/>
            <person name="De Clercq R."/>
            <person name="van Montagu M."/>
            <person name="Rogers J."/>
            <person name="Cronin A."/>
            <person name="Quail M.A."/>
            <person name="Bray-Allen S."/>
            <person name="Clark L."/>
            <person name="Doggett J."/>
            <person name="Hall S."/>
            <person name="Kay M."/>
            <person name="Lennard N."/>
            <person name="McLay K."/>
            <person name="Mayes R."/>
            <person name="Pettett A."/>
            <person name="Rajandream M.A."/>
            <person name="Lyne M."/>
            <person name="Benes V."/>
            <person name="Rechmann S."/>
            <person name="Borkova D."/>
            <person name="Bloecker H."/>
            <person name="Scharfe M."/>
            <person name="Grimm M."/>
            <person name="Loehnert T.-H."/>
            <person name="Dose S."/>
            <person name="de Haan M."/>
            <person name="Maarse A.C."/>
            <person name="Schaefer M."/>
            <person name="Mueller-Auer S."/>
            <person name="Gabel C."/>
            <person name="Fuchs M."/>
            <person name="Fartmann B."/>
            <person name="Granderath K."/>
            <person name="Dauner D."/>
            <person name="Herzl A."/>
            <person name="Neumann S."/>
            <person name="Argiriou A."/>
            <person name="Vitale D."/>
            <person name="Liguori R."/>
            <person name="Piravandi E."/>
            <person name="Massenet O."/>
            <person name="Quigley F."/>
            <person name="Clabauld G."/>
            <person name="Muendlein A."/>
            <person name="Felber R."/>
            <person name="Schnabl S."/>
            <person name="Hiller R."/>
            <person name="Schmidt W."/>
            <person name="Lecharny A."/>
            <person name="Aubourg S."/>
            <person name="Chefdor F."/>
            <person name="Cooke R."/>
            <person name="Berger C."/>
            <person name="Monfort A."/>
            <person name="Casacuberta E."/>
            <person name="Gibbons T."/>
            <person name="Weber N."/>
            <person name="Vandenbol M."/>
            <person name="Bargues M."/>
            <person name="Terol J."/>
            <person name="Torres A."/>
            <person name="Perez-Perez A."/>
            <person name="Purnelle B."/>
            <person name="Bent E."/>
            <person name="Johnson S."/>
            <person name="Tacon D."/>
            <person name="Jesse T."/>
            <person name="Heijnen L."/>
            <person name="Schwarz S."/>
            <person name="Scholler P."/>
            <person name="Heber S."/>
            <person name="Francs P."/>
            <person name="Bielke C."/>
            <person name="Frishman D."/>
            <person name="Haase D."/>
            <person name="Lemcke K."/>
            <person name="Mewes H.-W."/>
            <person name="Stocker S."/>
            <person name="Zaccaria P."/>
            <person name="Bevan M."/>
            <person name="Wilson R.K."/>
            <person name="de la Bastide M."/>
            <person name="Habermann K."/>
            <person name="Parnell L."/>
            <person name="Dedhia N."/>
            <person name="Gnoj L."/>
            <person name="Schutz K."/>
            <person name="Huang E."/>
            <person name="Spiegel L."/>
            <person name="Sekhon M."/>
            <person name="Murray J."/>
            <person name="Sheet P."/>
            <person name="Cordes M."/>
            <person name="Abu-Threideh J."/>
            <person name="Stoneking T."/>
            <person name="Kalicki J."/>
            <person name="Graves T."/>
            <person name="Harmon G."/>
            <person name="Edwards J."/>
            <person name="Latreille P."/>
            <person name="Courtney L."/>
            <person name="Cloud J."/>
            <person name="Abbott A."/>
            <person name="Scott K."/>
            <person name="Johnson D."/>
            <person name="Minx P."/>
            <person name="Bentley D."/>
            <person name="Fulton B."/>
            <person name="Miller N."/>
            <person name="Greco T."/>
            <person name="Kemp K."/>
            <person name="Kramer J."/>
            <person name="Fulton L."/>
            <person name="Mardis E."/>
            <person name="Dante M."/>
            <person name="Pepin K."/>
            <person name="Hillier L.W."/>
            <person name="Nelson J."/>
            <person name="Spieth J."/>
            <person name="Ryan E."/>
            <person name="Andrews S."/>
            <person name="Geisel C."/>
            <person name="Layman D."/>
            <person name="Du H."/>
            <person name="Ali J."/>
            <person name="Berghoff A."/>
            <person name="Jones K."/>
            <person name="Drone K."/>
            <person name="Cotton M."/>
            <person name="Joshu C."/>
            <person name="Antonoiu B."/>
            <person name="Zidanic M."/>
            <person name="Strong C."/>
            <person name="Sun H."/>
            <person name="Lamar B."/>
            <person name="Yordan C."/>
            <person name="Ma P."/>
            <person name="Zhong J."/>
            <person name="Preston R."/>
            <person name="Vil D."/>
            <person name="Shekher M."/>
            <person name="Matero A."/>
            <person name="Shah R."/>
            <person name="Swaby I.K."/>
            <person name="O'Shaughnessy A."/>
            <person name="Rodriguez M."/>
            <person name="Hoffman J."/>
            <person name="Till S."/>
            <person name="Granat S."/>
            <person name="Shohdy N."/>
            <person name="Hasegawa A."/>
            <person name="Hameed A."/>
            <person name="Lodhi M."/>
            <person name="Johnson A."/>
            <person name="Chen E."/>
            <person name="Marra M.A."/>
            <person name="Martienssen R."/>
            <person name="McCombie W.R."/>
        </authorList>
    </citation>
    <scope>NUCLEOTIDE SEQUENCE [LARGE SCALE GENOMIC DNA]</scope>
    <source>
        <strain>cv. Columbia</strain>
    </source>
</reference>
<reference key="2">
    <citation type="journal article" date="2017" name="Plant J.">
        <title>Araport11: a complete reannotation of the Arabidopsis thaliana reference genome.</title>
        <authorList>
            <person name="Cheng C.Y."/>
            <person name="Krishnakumar V."/>
            <person name="Chan A.P."/>
            <person name="Thibaud-Nissen F."/>
            <person name="Schobel S."/>
            <person name="Town C.D."/>
        </authorList>
    </citation>
    <scope>GENOME REANNOTATION</scope>
    <source>
        <strain>cv. Columbia</strain>
    </source>
</reference>
<reference key="3">
    <citation type="journal article" date="2003" name="Science">
        <title>Empirical analysis of transcriptional activity in the Arabidopsis genome.</title>
        <authorList>
            <person name="Yamada K."/>
            <person name="Lim J."/>
            <person name="Dale J.M."/>
            <person name="Chen H."/>
            <person name="Shinn P."/>
            <person name="Palm C.J."/>
            <person name="Southwick A.M."/>
            <person name="Wu H.C."/>
            <person name="Kim C.J."/>
            <person name="Nguyen M."/>
            <person name="Pham P.K."/>
            <person name="Cheuk R.F."/>
            <person name="Karlin-Newmann G."/>
            <person name="Liu S.X."/>
            <person name="Lam B."/>
            <person name="Sakano H."/>
            <person name="Wu T."/>
            <person name="Yu G."/>
            <person name="Miranda M."/>
            <person name="Quach H.L."/>
            <person name="Tripp M."/>
            <person name="Chang C.H."/>
            <person name="Lee J.M."/>
            <person name="Toriumi M.J."/>
            <person name="Chan M.M."/>
            <person name="Tang C.C."/>
            <person name="Onodera C.S."/>
            <person name="Deng J.M."/>
            <person name="Akiyama K."/>
            <person name="Ansari Y."/>
            <person name="Arakawa T."/>
            <person name="Banh J."/>
            <person name="Banno F."/>
            <person name="Bowser L."/>
            <person name="Brooks S.Y."/>
            <person name="Carninci P."/>
            <person name="Chao Q."/>
            <person name="Choy N."/>
            <person name="Enju A."/>
            <person name="Goldsmith A.D."/>
            <person name="Gurjal M."/>
            <person name="Hansen N.F."/>
            <person name="Hayashizaki Y."/>
            <person name="Johnson-Hopson C."/>
            <person name="Hsuan V.W."/>
            <person name="Iida K."/>
            <person name="Karnes M."/>
            <person name="Khan S."/>
            <person name="Koesema E."/>
            <person name="Ishida J."/>
            <person name="Jiang P.X."/>
            <person name="Jones T."/>
            <person name="Kawai J."/>
            <person name="Kamiya A."/>
            <person name="Meyers C."/>
            <person name="Nakajima M."/>
            <person name="Narusaka M."/>
            <person name="Seki M."/>
            <person name="Sakurai T."/>
            <person name="Satou M."/>
            <person name="Tamse R."/>
            <person name="Vaysberg M."/>
            <person name="Wallender E.K."/>
            <person name="Wong C."/>
            <person name="Yamamura Y."/>
            <person name="Yuan S."/>
            <person name="Shinozaki K."/>
            <person name="Davis R.W."/>
            <person name="Theologis A."/>
            <person name="Ecker J.R."/>
        </authorList>
    </citation>
    <scope>NUCLEOTIDE SEQUENCE [LARGE SCALE MRNA]</scope>
    <source>
        <strain>cv. Columbia</strain>
    </source>
</reference>
<reference key="4">
    <citation type="journal article" date="2009" name="DNA Res.">
        <title>Analysis of multiple occurrences of alternative splicing events in Arabidopsis thaliana using novel sequenced full-length cDNAs.</title>
        <authorList>
            <person name="Iida K."/>
            <person name="Fukami-Kobayashi K."/>
            <person name="Toyoda A."/>
            <person name="Sakaki Y."/>
            <person name="Kobayashi M."/>
            <person name="Seki M."/>
            <person name="Shinozaki K."/>
        </authorList>
    </citation>
    <scope>NUCLEOTIDE SEQUENCE [LARGE SCALE MRNA]</scope>
    <source>
        <strain>cv. Columbia</strain>
    </source>
</reference>
<reference key="5">
    <citation type="submission" date="2005-03" db="EMBL/GenBank/DDBJ databases">
        <title>Large-scale analysis of RIKEN Arabidopsis full-length (RAFL) cDNAs.</title>
        <authorList>
            <person name="Totoki Y."/>
            <person name="Seki M."/>
            <person name="Ishida J."/>
            <person name="Nakajima M."/>
            <person name="Enju A."/>
            <person name="Kamiya A."/>
            <person name="Narusaka M."/>
            <person name="Shin-i T."/>
            <person name="Nakagawa M."/>
            <person name="Sakamoto N."/>
            <person name="Oishi K."/>
            <person name="Kohara Y."/>
            <person name="Kobayashi M."/>
            <person name="Toyoda A."/>
            <person name="Sakaki Y."/>
            <person name="Sakurai T."/>
            <person name="Iida K."/>
            <person name="Akiyama K."/>
            <person name="Satou M."/>
            <person name="Toyoda T."/>
            <person name="Konagaya A."/>
            <person name="Carninci P."/>
            <person name="Kawai J."/>
            <person name="Hayashizaki Y."/>
            <person name="Shinozaki K."/>
        </authorList>
    </citation>
    <scope>NUCLEOTIDE SEQUENCE [LARGE SCALE MRNA] OF 198-487</scope>
    <source>
        <strain>cv. Columbia</strain>
    </source>
</reference>
<reference key="6">
    <citation type="journal article" date="2002" name="Trends Plant Sci.">
        <title>A simple nomenclature for a complex proton pump: VHA genes encode the vacuolar H(+)-ATPase.</title>
        <authorList>
            <person name="Sze H."/>
            <person name="Schumacher K."/>
            <person name="Mueller M.L."/>
            <person name="Padmanaban S."/>
            <person name="Taiz L."/>
        </authorList>
    </citation>
    <scope>GENE FAMILY</scope>
    <scope>NOMENCLATURE</scope>
</reference>
<reference key="7">
    <citation type="journal article" date="2012" name="Mol. Cell. Proteomics">
        <title>Comparative large-scale characterisation of plant vs. mammal proteins reveals similar and idiosyncratic N-alpha acetylation features.</title>
        <authorList>
            <person name="Bienvenut W.V."/>
            <person name="Sumpton D."/>
            <person name="Martinez A."/>
            <person name="Lilla S."/>
            <person name="Espagne C."/>
            <person name="Meinnel T."/>
            <person name="Giglione C."/>
        </authorList>
    </citation>
    <scope>ACETYLATION [LARGE SCALE ANALYSIS] AT GLY-2</scope>
    <scope>CLEAVAGE OF INITIATOR METHIONINE [LARGE SCALE ANALYSIS]</scope>
    <scope>IDENTIFICATION BY MASS SPECTROMETRY [LARGE SCALE ANALYSIS]</scope>
</reference>
<gene>
    <name type="primary">VHA-B2</name>
    <name type="ordered locus">At4g38510</name>
    <name type="ORF">F20M13.70</name>
</gene>
<proteinExistence type="evidence at protein level"/>
<comment type="function">
    <text>Non-catalytic subunit of the peripheral V1 complex of vacuolar ATPase. V-ATPase is responsible for acidifying a variety of intracellular compartments in eukaryotic cells.</text>
</comment>
<comment type="subunit">
    <text>V-ATPase is a heteromultimeric enzyme composed of a peripheral catalytic V1 complex (components A to H) attached to an integral membrane V0 proton pore complex (components: a, c, c'', d and e).</text>
</comment>
<comment type="subcellular location">
    <subcellularLocation>
        <location evidence="1">Vacuole membrane</location>
        <topology evidence="1">Peripheral membrane protein</topology>
    </subcellularLocation>
</comment>
<comment type="alternative products">
    <event type="alternative splicing"/>
    <isoform>
        <id>Q9SZN1-1</id>
        <name>1</name>
        <sequence type="displayed"/>
    </isoform>
    <text>A number of isoforms are produced. According to EST sequences.</text>
</comment>
<comment type="similarity">
    <text evidence="1">Belongs to the ATPase alpha/beta chains family.</text>
</comment>
<comment type="sequence caution" evidence="1">
    <conflict type="frameshift">
        <sequence resource="EMBL-CDS" id="AAK73967"/>
    </conflict>
</comment>
<comment type="sequence caution" evidence="1">
    <conflict type="erroneous initiation">
        <sequence resource="EMBL-CDS" id="BAD95251"/>
    </conflict>
</comment>
<sequence>MGAAENNLEMEGTLEIGMEYRTVSGVAGPLVILEKVKGPKYQEIVNIRLGDGTTRRGQVLEVDGEKAVVQVFEGTSGIDNKYTTVQFTGEVLKTPVSLDMLGRIFNGSGKPIDNGPPILPEAYLDISGSSINPSERTYPEEMIQTGISTIDVMNSIARGQKIPLFSAAGLPHNEIAAQICRQAGLVKRLEKSDNLLEHQEDDNFAIVFAAMGVNMETAQFFKRDFEENGSMERVTLFLNLANDPTIERIITPRIALTTAEYLAYECGKHVLVILTDMSSYADALREVSAAREEVPGRRGYPGYMYTDLATIYERAGRIEGRKGSITQIPILTMPNDDITHPTPDLTGYITEGQIYIDRQLHNRQIYPPINVLPSLSRLMKSAIGEGMTRRDHSDVSNQLYANYAIGKDVQAMKAVVGEEALSSEDLLYLEFLDKFERKFVAQGAYDTRNIFQSLDLAWTLLRIFPRELLHRIPAKTLDQFYSRDTTN</sequence>
<dbReference type="EMBL" id="AL035540">
    <property type="protein sequence ID" value="CAB37507.1"/>
    <property type="molecule type" value="Genomic_DNA"/>
</dbReference>
<dbReference type="EMBL" id="AL161593">
    <property type="protein sequence ID" value="CAB80515.1"/>
    <property type="molecule type" value="Genomic_DNA"/>
</dbReference>
<dbReference type="EMBL" id="CP002687">
    <property type="protein sequence ID" value="AEE86936.1"/>
    <property type="molecule type" value="Genomic_DNA"/>
</dbReference>
<dbReference type="EMBL" id="CP002687">
    <property type="protein sequence ID" value="AEE86937.1"/>
    <property type="molecule type" value="Genomic_DNA"/>
</dbReference>
<dbReference type="EMBL" id="CP002687">
    <property type="protein sequence ID" value="AEE86938.1"/>
    <property type="molecule type" value="Genomic_DNA"/>
</dbReference>
<dbReference type="EMBL" id="CP002687">
    <property type="protein sequence ID" value="AEE86939.1"/>
    <property type="molecule type" value="Genomic_DNA"/>
</dbReference>
<dbReference type="EMBL" id="AY039518">
    <property type="protein sequence ID" value="AAK62575.1"/>
    <property type="molecule type" value="mRNA"/>
</dbReference>
<dbReference type="EMBL" id="AY045609">
    <property type="protein sequence ID" value="AAK73967.1"/>
    <property type="status" value="ALT_FRAME"/>
    <property type="molecule type" value="mRNA"/>
</dbReference>
<dbReference type="EMBL" id="AY059167">
    <property type="protein sequence ID" value="AAL15392.1"/>
    <property type="molecule type" value="mRNA"/>
</dbReference>
<dbReference type="EMBL" id="AY090334">
    <property type="protein sequence ID" value="AAL90995.1"/>
    <property type="molecule type" value="mRNA"/>
</dbReference>
<dbReference type="EMBL" id="AK317281">
    <property type="protein sequence ID" value="BAH19957.1"/>
    <property type="molecule type" value="mRNA"/>
</dbReference>
<dbReference type="EMBL" id="AK317596">
    <property type="protein sequence ID" value="BAH20260.1"/>
    <property type="molecule type" value="mRNA"/>
</dbReference>
<dbReference type="EMBL" id="AK222158">
    <property type="protein sequence ID" value="BAD95251.1"/>
    <property type="status" value="ALT_INIT"/>
    <property type="molecule type" value="mRNA"/>
</dbReference>
<dbReference type="PIR" id="T05679">
    <property type="entry name" value="T05679"/>
</dbReference>
<dbReference type="RefSeq" id="NP_001031807.1">
    <molecule id="Q9SZN1-1"/>
    <property type="nucleotide sequence ID" value="NM_001036730.2"/>
</dbReference>
<dbReference type="RefSeq" id="NP_001031808.1">
    <molecule id="Q9SZN1-1"/>
    <property type="nucleotide sequence ID" value="NM_001036731.2"/>
</dbReference>
<dbReference type="RefSeq" id="NP_195563.1">
    <molecule id="Q9SZN1-1"/>
    <property type="nucleotide sequence ID" value="NM_120012.4"/>
</dbReference>
<dbReference type="RefSeq" id="NP_974707.1">
    <molecule id="Q9SZN1-1"/>
    <property type="nucleotide sequence ID" value="NM_202978.2"/>
</dbReference>
<dbReference type="SMR" id="Q9SZN1"/>
<dbReference type="BioGRID" id="15288">
    <property type="interactions" value="9"/>
</dbReference>
<dbReference type="FunCoup" id="Q9SZN1">
    <property type="interactions" value="2563"/>
</dbReference>
<dbReference type="IntAct" id="Q9SZN1">
    <property type="interactions" value="3"/>
</dbReference>
<dbReference type="STRING" id="3702.Q9SZN1"/>
<dbReference type="TCDB" id="3.A.2.2.5">
    <property type="family name" value="the h+- or na+-translocating f-type, v-type and a-type atpase (f-atpase) superfamily"/>
</dbReference>
<dbReference type="iPTMnet" id="Q9SZN1"/>
<dbReference type="PaxDb" id="3702-AT4G38510.5"/>
<dbReference type="ProteomicsDB" id="242317">
    <molecule id="Q9SZN1-1"/>
</dbReference>
<dbReference type="EnsemblPlants" id="AT4G38510.1">
    <molecule id="Q9SZN1-1"/>
    <property type="protein sequence ID" value="AT4G38510.1"/>
    <property type="gene ID" value="AT4G38510"/>
</dbReference>
<dbReference type="EnsemblPlants" id="AT4G38510.2">
    <molecule id="Q9SZN1-1"/>
    <property type="protein sequence ID" value="AT4G38510.2"/>
    <property type="gene ID" value="AT4G38510"/>
</dbReference>
<dbReference type="EnsemblPlants" id="AT4G38510.3">
    <molecule id="Q9SZN1-1"/>
    <property type="protein sequence ID" value="AT4G38510.3"/>
    <property type="gene ID" value="AT4G38510"/>
</dbReference>
<dbReference type="EnsemblPlants" id="AT4G38510.4">
    <molecule id="Q9SZN1-1"/>
    <property type="protein sequence ID" value="AT4G38510.4"/>
    <property type="gene ID" value="AT4G38510"/>
</dbReference>
<dbReference type="GeneID" id="830008"/>
<dbReference type="Gramene" id="AT4G38510.1">
    <molecule id="Q9SZN1-1"/>
    <property type="protein sequence ID" value="AT4G38510.1"/>
    <property type="gene ID" value="AT4G38510"/>
</dbReference>
<dbReference type="Gramene" id="AT4G38510.2">
    <molecule id="Q9SZN1-1"/>
    <property type="protein sequence ID" value="AT4G38510.2"/>
    <property type="gene ID" value="AT4G38510"/>
</dbReference>
<dbReference type="Gramene" id="AT4G38510.3">
    <molecule id="Q9SZN1-1"/>
    <property type="protein sequence ID" value="AT4G38510.3"/>
    <property type="gene ID" value="AT4G38510"/>
</dbReference>
<dbReference type="Gramene" id="AT4G38510.4">
    <molecule id="Q9SZN1-1"/>
    <property type="protein sequence ID" value="AT4G38510.4"/>
    <property type="gene ID" value="AT4G38510"/>
</dbReference>
<dbReference type="KEGG" id="ath:AT4G38510"/>
<dbReference type="Araport" id="AT4G38510"/>
<dbReference type="TAIR" id="AT4G38510">
    <property type="gene designation" value="VAB2"/>
</dbReference>
<dbReference type="eggNOG" id="KOG1351">
    <property type="taxonomic scope" value="Eukaryota"/>
</dbReference>
<dbReference type="HOGENOM" id="CLU_022916_3_0_1"/>
<dbReference type="InParanoid" id="Q9SZN1"/>
<dbReference type="OMA" id="HWRELDC"/>
<dbReference type="OrthoDB" id="1735853at2759"/>
<dbReference type="PhylomeDB" id="Q9SZN1"/>
<dbReference type="BioCyc" id="ARA:AT4G38510-MONOMER"/>
<dbReference type="CD-CODE" id="4299E36E">
    <property type="entry name" value="Nucleolus"/>
</dbReference>
<dbReference type="PRO" id="PR:Q9SZN1"/>
<dbReference type="Proteomes" id="UP000006548">
    <property type="component" value="Chromosome 4"/>
</dbReference>
<dbReference type="ExpressionAtlas" id="Q9SZN1">
    <property type="expression patterns" value="baseline and differential"/>
</dbReference>
<dbReference type="GO" id="GO:0033180">
    <property type="term" value="C:proton-transporting V-type ATPase, V1 domain"/>
    <property type="evidence" value="ECO:0007669"/>
    <property type="project" value="InterPro"/>
</dbReference>
<dbReference type="GO" id="GO:0005774">
    <property type="term" value="C:vacuolar membrane"/>
    <property type="evidence" value="ECO:0007669"/>
    <property type="project" value="UniProtKB-SubCell"/>
</dbReference>
<dbReference type="GO" id="GO:0005524">
    <property type="term" value="F:ATP binding"/>
    <property type="evidence" value="ECO:0007669"/>
    <property type="project" value="InterPro"/>
</dbReference>
<dbReference type="GO" id="GO:0046961">
    <property type="term" value="F:proton-transporting ATPase activity, rotational mechanism"/>
    <property type="evidence" value="ECO:0007669"/>
    <property type="project" value="InterPro"/>
</dbReference>
<dbReference type="GO" id="GO:0046034">
    <property type="term" value="P:ATP metabolic process"/>
    <property type="evidence" value="ECO:0007669"/>
    <property type="project" value="InterPro"/>
</dbReference>
<dbReference type="CDD" id="cd18112">
    <property type="entry name" value="ATP-synt_V_A-type_beta_C"/>
    <property type="match status" value="1"/>
</dbReference>
<dbReference type="CDD" id="cd18118">
    <property type="entry name" value="ATP-synt_V_A-type_beta_N"/>
    <property type="match status" value="1"/>
</dbReference>
<dbReference type="CDD" id="cd01135">
    <property type="entry name" value="V_A-ATPase_B"/>
    <property type="match status" value="1"/>
</dbReference>
<dbReference type="FunFam" id="3.40.50.12240:FF:000001">
    <property type="entry name" value="V-type proton ATPase subunit B, brain"/>
    <property type="match status" value="1"/>
</dbReference>
<dbReference type="Gene3D" id="3.40.50.12240">
    <property type="match status" value="1"/>
</dbReference>
<dbReference type="HAMAP" id="MF_00310">
    <property type="entry name" value="ATP_synth_B_arch"/>
    <property type="match status" value="1"/>
</dbReference>
<dbReference type="InterPro" id="IPR055190">
    <property type="entry name" value="ATP-synt_VA_C"/>
</dbReference>
<dbReference type="InterPro" id="IPR020003">
    <property type="entry name" value="ATPase_a/bsu_AS"/>
</dbReference>
<dbReference type="InterPro" id="IPR004100">
    <property type="entry name" value="ATPase_F1/V1/A1_a/bsu_N"/>
</dbReference>
<dbReference type="InterPro" id="IPR000194">
    <property type="entry name" value="ATPase_F1/V1/A1_a/bsu_nucl-bd"/>
</dbReference>
<dbReference type="InterPro" id="IPR005723">
    <property type="entry name" value="ATPase_V1-cplx_bsu"/>
</dbReference>
<dbReference type="InterPro" id="IPR027417">
    <property type="entry name" value="P-loop_NTPase"/>
</dbReference>
<dbReference type="InterPro" id="IPR022879">
    <property type="entry name" value="V-ATPase_su_B/beta"/>
</dbReference>
<dbReference type="NCBIfam" id="NF003235">
    <property type="entry name" value="PRK04196.1"/>
    <property type="match status" value="1"/>
</dbReference>
<dbReference type="NCBIfam" id="TIGR01040">
    <property type="entry name" value="V-ATPase_V1_B"/>
    <property type="match status" value="1"/>
</dbReference>
<dbReference type="PANTHER" id="PTHR43389">
    <property type="entry name" value="V-TYPE PROTON ATPASE SUBUNIT B"/>
    <property type="match status" value="1"/>
</dbReference>
<dbReference type="PANTHER" id="PTHR43389:SF4">
    <property type="entry name" value="V-TYPE PROTON ATPASE SUBUNIT B"/>
    <property type="match status" value="1"/>
</dbReference>
<dbReference type="Pfam" id="PF00006">
    <property type="entry name" value="ATP-synt_ab"/>
    <property type="match status" value="1"/>
</dbReference>
<dbReference type="Pfam" id="PF02874">
    <property type="entry name" value="ATP-synt_ab_N"/>
    <property type="match status" value="1"/>
</dbReference>
<dbReference type="Pfam" id="PF22919">
    <property type="entry name" value="ATP-synt_VA_C"/>
    <property type="match status" value="1"/>
</dbReference>
<dbReference type="PIRSF" id="PIRSF039114">
    <property type="entry name" value="V-ATPsynth_beta/V-ATPase_B"/>
    <property type="match status" value="1"/>
</dbReference>
<dbReference type="SUPFAM" id="SSF52540">
    <property type="entry name" value="P-loop containing nucleoside triphosphate hydrolases"/>
    <property type="match status" value="1"/>
</dbReference>
<dbReference type="PROSITE" id="PS00152">
    <property type="entry name" value="ATPASE_ALPHA_BETA"/>
    <property type="match status" value="1"/>
</dbReference>
<protein>
    <recommendedName>
        <fullName>V-type proton ATPase subunit B2</fullName>
        <shortName>V-ATPase subunit B2</shortName>
    </recommendedName>
    <alternativeName>
        <fullName>Vacuolar H(+)-ATPase subunit B isoform 2</fullName>
    </alternativeName>
    <alternativeName>
        <fullName>Vacuolar proton pump subunit B2</fullName>
    </alternativeName>
</protein>
<name>VATB2_ARATH</name>